<feature type="chain" id="PRO_1000022209" description="Glycine cleavage system H protein">
    <location>
        <begin position="1"/>
        <end position="126"/>
    </location>
</feature>
<feature type="domain" description="Lipoyl-binding" evidence="2">
    <location>
        <begin position="21"/>
        <end position="103"/>
    </location>
</feature>
<feature type="modified residue" description="N6-lipoyllysine" evidence="1">
    <location>
        <position position="62"/>
    </location>
</feature>
<protein>
    <recommendedName>
        <fullName evidence="1">Glycine cleavage system H protein</fullName>
    </recommendedName>
</protein>
<dbReference type="EMBL" id="CP000790">
    <property type="protein sequence ID" value="ABU73865.1"/>
    <property type="molecule type" value="Genomic_DNA"/>
</dbReference>
<dbReference type="RefSeq" id="WP_005431364.1">
    <property type="nucleotide sequence ID" value="NC_022270.1"/>
</dbReference>
<dbReference type="SMR" id="A7N5C3"/>
<dbReference type="GeneID" id="67379571"/>
<dbReference type="KEGG" id="vha:VIBHAR_05972"/>
<dbReference type="PATRIC" id="fig|338187.25.peg.4324"/>
<dbReference type="Proteomes" id="UP000008152">
    <property type="component" value="Chromosome II"/>
</dbReference>
<dbReference type="GO" id="GO:0005829">
    <property type="term" value="C:cytosol"/>
    <property type="evidence" value="ECO:0007669"/>
    <property type="project" value="TreeGrafter"/>
</dbReference>
<dbReference type="GO" id="GO:0005960">
    <property type="term" value="C:glycine cleavage complex"/>
    <property type="evidence" value="ECO:0007669"/>
    <property type="project" value="InterPro"/>
</dbReference>
<dbReference type="GO" id="GO:0019464">
    <property type="term" value="P:glycine decarboxylation via glycine cleavage system"/>
    <property type="evidence" value="ECO:0007669"/>
    <property type="project" value="UniProtKB-UniRule"/>
</dbReference>
<dbReference type="CDD" id="cd06848">
    <property type="entry name" value="GCS_H"/>
    <property type="match status" value="1"/>
</dbReference>
<dbReference type="FunFam" id="2.40.50.100:FF:000011">
    <property type="entry name" value="Glycine cleavage system H protein"/>
    <property type="match status" value="1"/>
</dbReference>
<dbReference type="Gene3D" id="2.40.50.100">
    <property type="match status" value="1"/>
</dbReference>
<dbReference type="HAMAP" id="MF_00272">
    <property type="entry name" value="GcvH"/>
    <property type="match status" value="1"/>
</dbReference>
<dbReference type="InterPro" id="IPR000089">
    <property type="entry name" value="Biotin_lipoyl"/>
</dbReference>
<dbReference type="InterPro" id="IPR002930">
    <property type="entry name" value="GCV_H"/>
</dbReference>
<dbReference type="InterPro" id="IPR033753">
    <property type="entry name" value="GCV_H/Fam206"/>
</dbReference>
<dbReference type="InterPro" id="IPR017453">
    <property type="entry name" value="GCV_H_sub"/>
</dbReference>
<dbReference type="InterPro" id="IPR011053">
    <property type="entry name" value="Single_hybrid_motif"/>
</dbReference>
<dbReference type="NCBIfam" id="TIGR00527">
    <property type="entry name" value="gcvH"/>
    <property type="match status" value="1"/>
</dbReference>
<dbReference type="NCBIfam" id="NF002270">
    <property type="entry name" value="PRK01202.1"/>
    <property type="match status" value="1"/>
</dbReference>
<dbReference type="PANTHER" id="PTHR11715">
    <property type="entry name" value="GLYCINE CLEAVAGE SYSTEM H PROTEIN"/>
    <property type="match status" value="1"/>
</dbReference>
<dbReference type="PANTHER" id="PTHR11715:SF3">
    <property type="entry name" value="GLYCINE CLEAVAGE SYSTEM H PROTEIN-RELATED"/>
    <property type="match status" value="1"/>
</dbReference>
<dbReference type="Pfam" id="PF01597">
    <property type="entry name" value="GCV_H"/>
    <property type="match status" value="1"/>
</dbReference>
<dbReference type="SUPFAM" id="SSF51230">
    <property type="entry name" value="Single hybrid motif"/>
    <property type="match status" value="1"/>
</dbReference>
<dbReference type="PROSITE" id="PS50968">
    <property type="entry name" value="BIOTINYL_LIPOYL"/>
    <property type="match status" value="1"/>
</dbReference>
<evidence type="ECO:0000255" key="1">
    <source>
        <dbReference type="HAMAP-Rule" id="MF_00272"/>
    </source>
</evidence>
<evidence type="ECO:0000255" key="2">
    <source>
        <dbReference type="PROSITE-ProRule" id="PRU01066"/>
    </source>
</evidence>
<accession>A7N5C3</accession>
<reference key="1">
    <citation type="submission" date="2007-08" db="EMBL/GenBank/DDBJ databases">
        <authorList>
            <consortium name="The Vibrio harveyi Genome Sequencing Project"/>
            <person name="Bassler B."/>
            <person name="Clifton S.W."/>
            <person name="Fulton L."/>
            <person name="Delehaunty K."/>
            <person name="Fronick C."/>
            <person name="Harrison M."/>
            <person name="Markivic C."/>
            <person name="Fulton R."/>
            <person name="Tin-Wollam A.-M."/>
            <person name="Shah N."/>
            <person name="Pepin K."/>
            <person name="Nash W."/>
            <person name="Thiruvilangam P."/>
            <person name="Bhonagiri V."/>
            <person name="Waters C."/>
            <person name="Tu K.C."/>
            <person name="Irgon J."/>
            <person name="Wilson R.K."/>
        </authorList>
    </citation>
    <scope>NUCLEOTIDE SEQUENCE [LARGE SCALE GENOMIC DNA]</scope>
    <source>
        <strain>ATCC BAA-1116 / BB120</strain>
    </source>
</reference>
<organism>
    <name type="scientific">Vibrio campbellii (strain ATCC BAA-1116)</name>
    <dbReference type="NCBI Taxonomy" id="2902295"/>
    <lineage>
        <taxon>Bacteria</taxon>
        <taxon>Pseudomonadati</taxon>
        <taxon>Pseudomonadota</taxon>
        <taxon>Gammaproteobacteria</taxon>
        <taxon>Vibrionales</taxon>
        <taxon>Vibrionaceae</taxon>
        <taxon>Vibrio</taxon>
    </lineage>
</organism>
<name>GCSH_VIBC1</name>
<gene>
    <name evidence="1" type="primary">gcvH</name>
    <name type="ordered locus">VIBHAR_05972</name>
</gene>
<proteinExistence type="inferred from homology"/>
<keyword id="KW-0450">Lipoyl</keyword>
<sequence length="126" mass="13980">MDKTLKFTDSHEWVRDNGDGTATIGISEHAQEMLGDVVFVDLPDVEDEVEAGESFSLVESVKAASDIYSPITGEVVEINEELEDSPELINEEPYEGGWIVKVKLSDPSELDDLKDAEEYLSSIEEE</sequence>
<comment type="function">
    <text evidence="1">The glycine cleavage system catalyzes the degradation of glycine. The H protein shuttles the methylamine group of glycine from the P protein to the T protein.</text>
</comment>
<comment type="cofactor">
    <cofactor evidence="1">
        <name>(R)-lipoate</name>
        <dbReference type="ChEBI" id="CHEBI:83088"/>
    </cofactor>
    <text evidence="1">Binds 1 lipoyl cofactor covalently.</text>
</comment>
<comment type="subunit">
    <text evidence="1">The glycine cleavage system is composed of four proteins: P, T, L and H.</text>
</comment>
<comment type="similarity">
    <text evidence="1">Belongs to the GcvH family.</text>
</comment>